<dbReference type="EMBL" id="FM178379">
    <property type="protein sequence ID" value="CAQ78475.1"/>
    <property type="molecule type" value="Genomic_DNA"/>
</dbReference>
<dbReference type="RefSeq" id="WP_012549583.1">
    <property type="nucleotide sequence ID" value="NC_011312.1"/>
</dbReference>
<dbReference type="SMR" id="B6EHH5"/>
<dbReference type="KEGG" id="vsa:VSAL_I0790"/>
<dbReference type="eggNOG" id="COG0216">
    <property type="taxonomic scope" value="Bacteria"/>
</dbReference>
<dbReference type="HOGENOM" id="CLU_036856_0_1_6"/>
<dbReference type="Proteomes" id="UP000001730">
    <property type="component" value="Chromosome 1"/>
</dbReference>
<dbReference type="GO" id="GO:0005737">
    <property type="term" value="C:cytoplasm"/>
    <property type="evidence" value="ECO:0007669"/>
    <property type="project" value="UniProtKB-SubCell"/>
</dbReference>
<dbReference type="GO" id="GO:0016149">
    <property type="term" value="F:translation release factor activity, codon specific"/>
    <property type="evidence" value="ECO:0007669"/>
    <property type="project" value="UniProtKB-UniRule"/>
</dbReference>
<dbReference type="FunFam" id="3.30.160.20:FF:000004">
    <property type="entry name" value="Peptide chain release factor 1"/>
    <property type="match status" value="1"/>
</dbReference>
<dbReference type="FunFam" id="3.30.70.1660:FF:000002">
    <property type="entry name" value="Peptide chain release factor 1"/>
    <property type="match status" value="1"/>
</dbReference>
<dbReference type="FunFam" id="3.30.70.1660:FF:000004">
    <property type="entry name" value="Peptide chain release factor 1"/>
    <property type="match status" value="1"/>
</dbReference>
<dbReference type="Gene3D" id="3.30.160.20">
    <property type="match status" value="1"/>
</dbReference>
<dbReference type="Gene3D" id="3.30.70.1660">
    <property type="match status" value="1"/>
</dbReference>
<dbReference type="Gene3D" id="6.10.140.1950">
    <property type="match status" value="1"/>
</dbReference>
<dbReference type="HAMAP" id="MF_00093">
    <property type="entry name" value="Rel_fac_1"/>
    <property type="match status" value="1"/>
</dbReference>
<dbReference type="InterPro" id="IPR005139">
    <property type="entry name" value="PCRF"/>
</dbReference>
<dbReference type="InterPro" id="IPR000352">
    <property type="entry name" value="Pep_chain_release_fac_I"/>
</dbReference>
<dbReference type="InterPro" id="IPR045853">
    <property type="entry name" value="Pep_chain_release_fac_I_sf"/>
</dbReference>
<dbReference type="InterPro" id="IPR050057">
    <property type="entry name" value="Prokaryotic/Mito_RF"/>
</dbReference>
<dbReference type="InterPro" id="IPR004373">
    <property type="entry name" value="RF-1"/>
</dbReference>
<dbReference type="NCBIfam" id="TIGR00019">
    <property type="entry name" value="prfA"/>
    <property type="match status" value="1"/>
</dbReference>
<dbReference type="NCBIfam" id="NF001859">
    <property type="entry name" value="PRK00591.1"/>
    <property type="match status" value="1"/>
</dbReference>
<dbReference type="PANTHER" id="PTHR43804">
    <property type="entry name" value="LD18447P"/>
    <property type="match status" value="1"/>
</dbReference>
<dbReference type="PANTHER" id="PTHR43804:SF7">
    <property type="entry name" value="LD18447P"/>
    <property type="match status" value="1"/>
</dbReference>
<dbReference type="Pfam" id="PF03462">
    <property type="entry name" value="PCRF"/>
    <property type="match status" value="1"/>
</dbReference>
<dbReference type="Pfam" id="PF00472">
    <property type="entry name" value="RF-1"/>
    <property type="match status" value="1"/>
</dbReference>
<dbReference type="SMART" id="SM00937">
    <property type="entry name" value="PCRF"/>
    <property type="match status" value="1"/>
</dbReference>
<dbReference type="SUPFAM" id="SSF75620">
    <property type="entry name" value="Release factor"/>
    <property type="match status" value="1"/>
</dbReference>
<dbReference type="PROSITE" id="PS00745">
    <property type="entry name" value="RF_PROK_I"/>
    <property type="match status" value="1"/>
</dbReference>
<name>RF1_ALISL</name>
<comment type="function">
    <text evidence="1">Peptide chain release factor 1 directs the termination of translation in response to the peptide chain termination codons UAG and UAA.</text>
</comment>
<comment type="subcellular location">
    <subcellularLocation>
        <location evidence="1">Cytoplasm</location>
    </subcellularLocation>
</comment>
<comment type="PTM">
    <text evidence="1">Methylated by PrmC. Methylation increases the termination efficiency of RF1.</text>
</comment>
<comment type="similarity">
    <text evidence="1">Belongs to the prokaryotic/mitochondrial release factor family.</text>
</comment>
<sequence>MKASIRVKLETLVERYEEVQHLLGDPGVIGDQNKFRALSREYSQLEEVTQCFQAYEKVQEDLVAAQEMAQEDDAEMREMAQDEIKEAKEASERLTDELQVLLIPKDPNDERNCFLEIRAGAGGDEAGIFAGNLFRMYSRFAEKKGWRIEVMSSHASEQGGFKEMIAKVSGDGAYGILKFESGGHRVQRVPETESQGRVHTSACTIAVMAEIPEADLPEIKSSDLKIDTFRSSGAGGQHVNTTDSAIRITHLPTGTVVECQDERSQHKNKAKAMSVLAARIIQAEEARRAAVVSDTRRNLLGSGDRSDRIRTYNYPQSRVSDHRINLTIYRLNEVMEGDLAALIEPVVLEYQADQLAALAEQN</sequence>
<feature type="chain" id="PRO_1000093418" description="Peptide chain release factor 1">
    <location>
        <begin position="1"/>
        <end position="362"/>
    </location>
</feature>
<feature type="modified residue" description="N5-methylglutamine" evidence="1">
    <location>
        <position position="237"/>
    </location>
</feature>
<keyword id="KW-0963">Cytoplasm</keyword>
<keyword id="KW-0488">Methylation</keyword>
<keyword id="KW-0648">Protein biosynthesis</keyword>
<gene>
    <name evidence="1" type="primary">prfA</name>
    <name type="ordered locus">VSAL_I0790</name>
</gene>
<protein>
    <recommendedName>
        <fullName evidence="1">Peptide chain release factor 1</fullName>
        <shortName evidence="1">RF-1</shortName>
    </recommendedName>
</protein>
<organism>
    <name type="scientific">Aliivibrio salmonicida (strain LFI1238)</name>
    <name type="common">Vibrio salmonicida (strain LFI1238)</name>
    <dbReference type="NCBI Taxonomy" id="316275"/>
    <lineage>
        <taxon>Bacteria</taxon>
        <taxon>Pseudomonadati</taxon>
        <taxon>Pseudomonadota</taxon>
        <taxon>Gammaproteobacteria</taxon>
        <taxon>Vibrionales</taxon>
        <taxon>Vibrionaceae</taxon>
        <taxon>Aliivibrio</taxon>
    </lineage>
</organism>
<reference key="1">
    <citation type="journal article" date="2008" name="BMC Genomics">
        <title>The genome sequence of the fish pathogen Aliivibrio salmonicida strain LFI1238 shows extensive evidence of gene decay.</title>
        <authorList>
            <person name="Hjerde E."/>
            <person name="Lorentzen M.S."/>
            <person name="Holden M.T."/>
            <person name="Seeger K."/>
            <person name="Paulsen S."/>
            <person name="Bason N."/>
            <person name="Churcher C."/>
            <person name="Harris D."/>
            <person name="Norbertczak H."/>
            <person name="Quail M.A."/>
            <person name="Sanders S."/>
            <person name="Thurston S."/>
            <person name="Parkhill J."/>
            <person name="Willassen N.P."/>
            <person name="Thomson N.R."/>
        </authorList>
    </citation>
    <scope>NUCLEOTIDE SEQUENCE [LARGE SCALE GENOMIC DNA]</scope>
    <source>
        <strain>LFI1238</strain>
    </source>
</reference>
<evidence type="ECO:0000255" key="1">
    <source>
        <dbReference type="HAMAP-Rule" id="MF_00093"/>
    </source>
</evidence>
<accession>B6EHH5</accession>
<proteinExistence type="inferred from homology"/>